<feature type="chain" id="PRO_1000120166" description="Large ribosomal subunit protein bL32">
    <location>
        <begin position="1"/>
        <end position="60"/>
    </location>
</feature>
<feature type="region of interest" description="Disordered" evidence="2">
    <location>
        <begin position="1"/>
        <end position="27"/>
    </location>
</feature>
<feature type="compositionally biased region" description="Basic residues" evidence="2">
    <location>
        <begin position="1"/>
        <end position="22"/>
    </location>
</feature>
<organism>
    <name type="scientific">Rhodospirillum centenum (strain ATCC 51521 / SW)</name>
    <dbReference type="NCBI Taxonomy" id="414684"/>
    <lineage>
        <taxon>Bacteria</taxon>
        <taxon>Pseudomonadati</taxon>
        <taxon>Pseudomonadota</taxon>
        <taxon>Alphaproteobacteria</taxon>
        <taxon>Rhodospirillales</taxon>
        <taxon>Rhodospirillaceae</taxon>
        <taxon>Rhodospirillum</taxon>
    </lineage>
</organism>
<dbReference type="EMBL" id="CP000613">
    <property type="protein sequence ID" value="ACI98733.1"/>
    <property type="molecule type" value="Genomic_DNA"/>
</dbReference>
<dbReference type="RefSeq" id="WP_012566520.1">
    <property type="nucleotide sequence ID" value="NC_011420.2"/>
</dbReference>
<dbReference type="SMR" id="B6IMR7"/>
<dbReference type="STRING" id="414684.RC1_1329"/>
<dbReference type="KEGG" id="rce:RC1_1329"/>
<dbReference type="eggNOG" id="COG0333">
    <property type="taxonomic scope" value="Bacteria"/>
</dbReference>
<dbReference type="HOGENOM" id="CLU_129084_1_3_5"/>
<dbReference type="OrthoDB" id="9801927at2"/>
<dbReference type="Proteomes" id="UP000001591">
    <property type="component" value="Chromosome"/>
</dbReference>
<dbReference type="GO" id="GO:0015934">
    <property type="term" value="C:large ribosomal subunit"/>
    <property type="evidence" value="ECO:0007669"/>
    <property type="project" value="InterPro"/>
</dbReference>
<dbReference type="GO" id="GO:0003735">
    <property type="term" value="F:structural constituent of ribosome"/>
    <property type="evidence" value="ECO:0007669"/>
    <property type="project" value="InterPro"/>
</dbReference>
<dbReference type="GO" id="GO:0006412">
    <property type="term" value="P:translation"/>
    <property type="evidence" value="ECO:0007669"/>
    <property type="project" value="UniProtKB-UniRule"/>
</dbReference>
<dbReference type="FunFam" id="1.20.5.640:FF:000001">
    <property type="entry name" value="50S ribosomal protein L32"/>
    <property type="match status" value="1"/>
</dbReference>
<dbReference type="Gene3D" id="1.20.5.640">
    <property type="entry name" value="Single helix bin"/>
    <property type="match status" value="1"/>
</dbReference>
<dbReference type="HAMAP" id="MF_00340">
    <property type="entry name" value="Ribosomal_bL32"/>
    <property type="match status" value="1"/>
</dbReference>
<dbReference type="InterPro" id="IPR002677">
    <property type="entry name" value="Ribosomal_bL32"/>
</dbReference>
<dbReference type="InterPro" id="IPR044957">
    <property type="entry name" value="Ribosomal_bL32_bact"/>
</dbReference>
<dbReference type="InterPro" id="IPR011332">
    <property type="entry name" value="Ribosomal_zn-bd"/>
</dbReference>
<dbReference type="NCBIfam" id="TIGR01031">
    <property type="entry name" value="rpmF_bact"/>
    <property type="match status" value="1"/>
</dbReference>
<dbReference type="PANTHER" id="PTHR35534">
    <property type="entry name" value="50S RIBOSOMAL PROTEIN L32"/>
    <property type="match status" value="1"/>
</dbReference>
<dbReference type="PANTHER" id="PTHR35534:SF1">
    <property type="entry name" value="LARGE RIBOSOMAL SUBUNIT PROTEIN BL32"/>
    <property type="match status" value="1"/>
</dbReference>
<dbReference type="Pfam" id="PF01783">
    <property type="entry name" value="Ribosomal_L32p"/>
    <property type="match status" value="1"/>
</dbReference>
<dbReference type="SUPFAM" id="SSF57829">
    <property type="entry name" value="Zn-binding ribosomal proteins"/>
    <property type="match status" value="1"/>
</dbReference>
<protein>
    <recommendedName>
        <fullName evidence="1">Large ribosomal subunit protein bL32</fullName>
    </recommendedName>
    <alternativeName>
        <fullName evidence="3">50S ribosomal protein L32</fullName>
    </alternativeName>
</protein>
<sequence>MAVPKKKTSKSRRDMRRSHHALKGSAYGECPNCGELKRPHHVCGSCGHYDGREVVQNASA</sequence>
<gene>
    <name evidence="1" type="primary">rpmF</name>
    <name type="ordered locus">RC1_1329</name>
</gene>
<proteinExistence type="inferred from homology"/>
<evidence type="ECO:0000255" key="1">
    <source>
        <dbReference type="HAMAP-Rule" id="MF_00340"/>
    </source>
</evidence>
<evidence type="ECO:0000256" key="2">
    <source>
        <dbReference type="SAM" id="MobiDB-lite"/>
    </source>
</evidence>
<evidence type="ECO:0000305" key="3"/>
<accession>B6IMR7</accession>
<comment type="similarity">
    <text evidence="1">Belongs to the bacterial ribosomal protein bL32 family.</text>
</comment>
<keyword id="KW-1185">Reference proteome</keyword>
<keyword id="KW-0687">Ribonucleoprotein</keyword>
<keyword id="KW-0689">Ribosomal protein</keyword>
<reference key="1">
    <citation type="submission" date="2007-03" db="EMBL/GenBank/DDBJ databases">
        <title>Genome sequence of Rhodospirillum centenum.</title>
        <authorList>
            <person name="Touchman J.W."/>
            <person name="Bauer C."/>
            <person name="Blankenship R.E."/>
        </authorList>
    </citation>
    <scope>NUCLEOTIDE SEQUENCE [LARGE SCALE GENOMIC DNA]</scope>
    <source>
        <strain>ATCC 51521 / SW</strain>
    </source>
</reference>
<name>RL32_RHOCS</name>